<name>HSLO_VIBPA</name>
<gene>
    <name evidence="1" type="primary">hslO</name>
    <name type="ordered locus">VP0130</name>
</gene>
<sequence>MANNVLNRYLFEDLSVRGELVQLDEAYQRIISSKEYPAAVQKLLGELLVSTTLLTATLKFEGSITIQLQGDGPVSLAVINGDHNQQVRGVARWEGDIADDASLHEMMGKGYLVITIEPKKGERYQGVVGLEGENLTEVLEGYFANSEQLKTRLWIRTGEFEGKPHAAGMLIQVIPDGTGSPDDFEHLEQLTNTVKDEELFGLEANDLLYRLYNQDKVRVYEPQPVAFHCGCSRERSGAAIITVEKAEIYDILAEVGSVSLHCDYCGTTYTFDETEVTELYTQASGGNKTLH</sequence>
<evidence type="ECO:0000255" key="1">
    <source>
        <dbReference type="HAMAP-Rule" id="MF_00117"/>
    </source>
</evidence>
<organism>
    <name type="scientific">Vibrio parahaemolyticus serotype O3:K6 (strain RIMD 2210633)</name>
    <dbReference type="NCBI Taxonomy" id="223926"/>
    <lineage>
        <taxon>Bacteria</taxon>
        <taxon>Pseudomonadati</taxon>
        <taxon>Pseudomonadota</taxon>
        <taxon>Gammaproteobacteria</taxon>
        <taxon>Vibrionales</taxon>
        <taxon>Vibrionaceae</taxon>
        <taxon>Vibrio</taxon>
    </lineage>
</organism>
<proteinExistence type="inferred from homology"/>
<feature type="chain" id="PRO_0000192223" description="33 kDa chaperonin">
    <location>
        <begin position="1"/>
        <end position="291"/>
    </location>
</feature>
<feature type="disulfide bond" description="Redox-active" evidence="1">
    <location>
        <begin position="229"/>
        <end position="231"/>
    </location>
</feature>
<feature type="disulfide bond" description="Redox-active" evidence="1">
    <location>
        <begin position="262"/>
        <end position="265"/>
    </location>
</feature>
<accession>Q87TE0</accession>
<protein>
    <recommendedName>
        <fullName evidence="1">33 kDa chaperonin</fullName>
    </recommendedName>
    <alternativeName>
        <fullName evidence="1">Heat shock protein 33 homolog</fullName>
        <shortName evidence="1">HSP33</shortName>
    </alternativeName>
</protein>
<comment type="function">
    <text evidence="1">Redox regulated molecular chaperone. Protects both thermally unfolding and oxidatively damaged proteins from irreversible aggregation. Plays an important role in the bacterial defense system toward oxidative stress.</text>
</comment>
<comment type="subcellular location">
    <subcellularLocation>
        <location evidence="1">Cytoplasm</location>
    </subcellularLocation>
</comment>
<comment type="PTM">
    <text evidence="1">Under oxidizing conditions two disulfide bonds are formed involving the reactive cysteines. Under reducing conditions zinc is bound to the reactive cysteines and the protein is inactive.</text>
</comment>
<comment type="similarity">
    <text evidence="1">Belongs to the HSP33 family.</text>
</comment>
<reference key="1">
    <citation type="journal article" date="2003" name="Lancet">
        <title>Genome sequence of Vibrio parahaemolyticus: a pathogenic mechanism distinct from that of V. cholerae.</title>
        <authorList>
            <person name="Makino K."/>
            <person name="Oshima K."/>
            <person name="Kurokawa K."/>
            <person name="Yokoyama K."/>
            <person name="Uda T."/>
            <person name="Tagomori K."/>
            <person name="Iijima Y."/>
            <person name="Najima M."/>
            <person name="Nakano M."/>
            <person name="Yamashita A."/>
            <person name="Kubota Y."/>
            <person name="Kimura S."/>
            <person name="Yasunaga T."/>
            <person name="Honda T."/>
            <person name="Shinagawa H."/>
            <person name="Hattori M."/>
            <person name="Iida T."/>
        </authorList>
    </citation>
    <scope>NUCLEOTIDE SEQUENCE [LARGE SCALE GENOMIC DNA]</scope>
    <source>
        <strain>RIMD 2210633</strain>
    </source>
</reference>
<dbReference type="EMBL" id="BA000031">
    <property type="protein sequence ID" value="BAC58393.1"/>
    <property type="molecule type" value="Genomic_DNA"/>
</dbReference>
<dbReference type="RefSeq" id="NP_796509.1">
    <property type="nucleotide sequence ID" value="NC_004603.1"/>
</dbReference>
<dbReference type="RefSeq" id="WP_005465326.1">
    <property type="nucleotide sequence ID" value="NC_004603.1"/>
</dbReference>
<dbReference type="SMR" id="Q87TE0"/>
<dbReference type="GeneID" id="1187597"/>
<dbReference type="KEGG" id="vpa:VP0130"/>
<dbReference type="PATRIC" id="fig|223926.6.peg.122"/>
<dbReference type="eggNOG" id="COG1281">
    <property type="taxonomic scope" value="Bacteria"/>
</dbReference>
<dbReference type="HOGENOM" id="CLU_054493_0_0_6"/>
<dbReference type="Proteomes" id="UP000002493">
    <property type="component" value="Chromosome 1"/>
</dbReference>
<dbReference type="GO" id="GO:0005737">
    <property type="term" value="C:cytoplasm"/>
    <property type="evidence" value="ECO:0007669"/>
    <property type="project" value="UniProtKB-SubCell"/>
</dbReference>
<dbReference type="GO" id="GO:0044183">
    <property type="term" value="F:protein folding chaperone"/>
    <property type="evidence" value="ECO:0007669"/>
    <property type="project" value="TreeGrafter"/>
</dbReference>
<dbReference type="GO" id="GO:0051082">
    <property type="term" value="F:unfolded protein binding"/>
    <property type="evidence" value="ECO:0007669"/>
    <property type="project" value="UniProtKB-UniRule"/>
</dbReference>
<dbReference type="GO" id="GO:0042026">
    <property type="term" value="P:protein refolding"/>
    <property type="evidence" value="ECO:0007669"/>
    <property type="project" value="TreeGrafter"/>
</dbReference>
<dbReference type="CDD" id="cd00498">
    <property type="entry name" value="Hsp33"/>
    <property type="match status" value="1"/>
</dbReference>
<dbReference type="Gene3D" id="1.10.287.480">
    <property type="entry name" value="helix hairpin bin"/>
    <property type="match status" value="1"/>
</dbReference>
<dbReference type="Gene3D" id="3.55.30.10">
    <property type="entry name" value="Hsp33 domain"/>
    <property type="match status" value="1"/>
</dbReference>
<dbReference type="Gene3D" id="3.90.1280.10">
    <property type="entry name" value="HSP33 redox switch-like"/>
    <property type="match status" value="1"/>
</dbReference>
<dbReference type="HAMAP" id="MF_00117">
    <property type="entry name" value="HslO"/>
    <property type="match status" value="1"/>
</dbReference>
<dbReference type="InterPro" id="IPR000397">
    <property type="entry name" value="Heat_shock_Hsp33"/>
</dbReference>
<dbReference type="InterPro" id="IPR016154">
    <property type="entry name" value="Heat_shock_Hsp33_C"/>
</dbReference>
<dbReference type="InterPro" id="IPR016153">
    <property type="entry name" value="Heat_shock_Hsp33_N"/>
</dbReference>
<dbReference type="InterPro" id="IPR023212">
    <property type="entry name" value="Hsp33_helix_hairpin_bin_dom_sf"/>
</dbReference>
<dbReference type="NCBIfam" id="NF001033">
    <property type="entry name" value="PRK00114.1"/>
    <property type="match status" value="1"/>
</dbReference>
<dbReference type="PANTHER" id="PTHR30111">
    <property type="entry name" value="33 KDA CHAPERONIN"/>
    <property type="match status" value="1"/>
</dbReference>
<dbReference type="PANTHER" id="PTHR30111:SF1">
    <property type="entry name" value="33 KDA CHAPERONIN"/>
    <property type="match status" value="1"/>
</dbReference>
<dbReference type="Pfam" id="PF01430">
    <property type="entry name" value="HSP33"/>
    <property type="match status" value="1"/>
</dbReference>
<dbReference type="PIRSF" id="PIRSF005261">
    <property type="entry name" value="Heat_shock_Hsp33"/>
    <property type="match status" value="1"/>
</dbReference>
<dbReference type="SUPFAM" id="SSF64397">
    <property type="entry name" value="Hsp33 domain"/>
    <property type="match status" value="1"/>
</dbReference>
<dbReference type="SUPFAM" id="SSF118352">
    <property type="entry name" value="HSP33 redox switch-like"/>
    <property type="match status" value="1"/>
</dbReference>
<keyword id="KW-0143">Chaperone</keyword>
<keyword id="KW-0963">Cytoplasm</keyword>
<keyword id="KW-1015">Disulfide bond</keyword>
<keyword id="KW-0676">Redox-active center</keyword>
<keyword id="KW-0862">Zinc</keyword>